<gene>
    <name type="ordered locus">Dred_0717</name>
</gene>
<name>Y717_DESRM</name>
<sequence>MFDIKEDQNGVVVKVRVQPRASKNSLAGEMEGALKVRLTAPPVDGAANEACCKFFGELFGVAKSKVEIIAGHTGRNKLVHIQGVTEKQARFILK</sequence>
<protein>
    <recommendedName>
        <fullName evidence="1">UPF0235 protein Dred_0717</fullName>
    </recommendedName>
</protein>
<feature type="chain" id="PRO_1000082640" description="UPF0235 protein Dred_0717">
    <location>
        <begin position="1"/>
        <end position="94"/>
    </location>
</feature>
<proteinExistence type="inferred from homology"/>
<dbReference type="EMBL" id="CP000612">
    <property type="protein sequence ID" value="ABO49256.1"/>
    <property type="molecule type" value="Genomic_DNA"/>
</dbReference>
<dbReference type="RefSeq" id="WP_011877092.1">
    <property type="nucleotide sequence ID" value="NC_009253.1"/>
</dbReference>
<dbReference type="SMR" id="A4J2F3"/>
<dbReference type="STRING" id="349161.Dred_0717"/>
<dbReference type="KEGG" id="drm:Dred_0717"/>
<dbReference type="eggNOG" id="COG1872">
    <property type="taxonomic scope" value="Bacteria"/>
</dbReference>
<dbReference type="HOGENOM" id="CLU_130694_6_0_9"/>
<dbReference type="OrthoDB" id="9800587at2"/>
<dbReference type="Proteomes" id="UP000001556">
    <property type="component" value="Chromosome"/>
</dbReference>
<dbReference type="GO" id="GO:0005737">
    <property type="term" value="C:cytoplasm"/>
    <property type="evidence" value="ECO:0007669"/>
    <property type="project" value="TreeGrafter"/>
</dbReference>
<dbReference type="Gene3D" id="3.30.1200.10">
    <property type="entry name" value="YggU-like"/>
    <property type="match status" value="1"/>
</dbReference>
<dbReference type="HAMAP" id="MF_00634">
    <property type="entry name" value="UPF0235"/>
    <property type="match status" value="1"/>
</dbReference>
<dbReference type="InterPro" id="IPR003746">
    <property type="entry name" value="DUF167"/>
</dbReference>
<dbReference type="InterPro" id="IPR036591">
    <property type="entry name" value="YggU-like_sf"/>
</dbReference>
<dbReference type="NCBIfam" id="TIGR00251">
    <property type="entry name" value="DUF167 family protein"/>
    <property type="match status" value="1"/>
</dbReference>
<dbReference type="PANTHER" id="PTHR13420">
    <property type="entry name" value="UPF0235 PROTEIN C15ORF40"/>
    <property type="match status" value="1"/>
</dbReference>
<dbReference type="PANTHER" id="PTHR13420:SF7">
    <property type="entry name" value="UPF0235 PROTEIN C15ORF40"/>
    <property type="match status" value="1"/>
</dbReference>
<dbReference type="Pfam" id="PF02594">
    <property type="entry name" value="DUF167"/>
    <property type="match status" value="1"/>
</dbReference>
<dbReference type="SMART" id="SM01152">
    <property type="entry name" value="DUF167"/>
    <property type="match status" value="1"/>
</dbReference>
<dbReference type="SUPFAM" id="SSF69786">
    <property type="entry name" value="YggU-like"/>
    <property type="match status" value="1"/>
</dbReference>
<accession>A4J2F3</accession>
<organism>
    <name type="scientific">Desulforamulus reducens (strain ATCC BAA-1160 / DSM 100696 / MI-1)</name>
    <name type="common">Desulfotomaculum reducens</name>
    <dbReference type="NCBI Taxonomy" id="349161"/>
    <lineage>
        <taxon>Bacteria</taxon>
        <taxon>Bacillati</taxon>
        <taxon>Bacillota</taxon>
        <taxon>Clostridia</taxon>
        <taxon>Eubacteriales</taxon>
        <taxon>Peptococcaceae</taxon>
        <taxon>Desulforamulus</taxon>
    </lineage>
</organism>
<comment type="similarity">
    <text evidence="1">Belongs to the UPF0235 family.</text>
</comment>
<keyword id="KW-1185">Reference proteome</keyword>
<evidence type="ECO:0000255" key="1">
    <source>
        <dbReference type="HAMAP-Rule" id="MF_00634"/>
    </source>
</evidence>
<reference key="1">
    <citation type="submission" date="2007-03" db="EMBL/GenBank/DDBJ databases">
        <title>Complete sequence of Desulfotomaculum reducens MI-1.</title>
        <authorList>
            <consortium name="US DOE Joint Genome Institute"/>
            <person name="Copeland A."/>
            <person name="Lucas S."/>
            <person name="Lapidus A."/>
            <person name="Barry K."/>
            <person name="Detter J.C."/>
            <person name="Glavina del Rio T."/>
            <person name="Hammon N."/>
            <person name="Israni S."/>
            <person name="Dalin E."/>
            <person name="Tice H."/>
            <person name="Pitluck S."/>
            <person name="Sims D."/>
            <person name="Brettin T."/>
            <person name="Bruce D."/>
            <person name="Han C."/>
            <person name="Tapia R."/>
            <person name="Schmutz J."/>
            <person name="Larimer F."/>
            <person name="Land M."/>
            <person name="Hauser L."/>
            <person name="Kyrpides N."/>
            <person name="Kim E."/>
            <person name="Tebo B.M."/>
            <person name="Richardson P."/>
        </authorList>
    </citation>
    <scope>NUCLEOTIDE SEQUENCE [LARGE SCALE GENOMIC DNA]</scope>
    <source>
        <strain>ATCC BAA-1160 / DSM 100696 / MI-1</strain>
    </source>
</reference>